<sequence>MQLSDFSFELPDELIARYPLETRSASRLLHLDAKGQYHDHMFTDIIDLFEEGDLLVLNDTKVMKARLKGKRATGGAIEILVERMLNHTTAYCHIKASNSPKAGAELFVGADNIPVIVRGRHENLFVVEFSQPILPVLEQYGQLPIPPYFNREAEEIDTERYQTVFHNPEKIASVAAPTASLHFDEELLAKLDQKGVKKTFVTLHVGAGTFMPVRTDDITNHVMHSEWCDVPQETIDLILATKARGNKVIAVGTTATRALESAAQAHGGKIAAWTGDTQIFIYPGYEFCIVDRLITNFHLPESTLLMLVSALSNRENILAAYEHAVKDRYRFFSYGDAMLIDKLEV</sequence>
<comment type="function">
    <text evidence="1">Transfers and isomerizes the ribose moiety from AdoMet to the 7-aminomethyl group of 7-deazaguanine (preQ1-tRNA) to give epoxyqueuosine (oQ-tRNA).</text>
</comment>
<comment type="catalytic activity">
    <reaction evidence="1">
        <text>7-aminomethyl-7-carbaguanosine(34) in tRNA + S-adenosyl-L-methionine = epoxyqueuosine(34) in tRNA + adenine + L-methionine + 2 H(+)</text>
        <dbReference type="Rhea" id="RHEA:32155"/>
        <dbReference type="Rhea" id="RHEA-COMP:10342"/>
        <dbReference type="Rhea" id="RHEA-COMP:18582"/>
        <dbReference type="ChEBI" id="CHEBI:15378"/>
        <dbReference type="ChEBI" id="CHEBI:16708"/>
        <dbReference type="ChEBI" id="CHEBI:57844"/>
        <dbReference type="ChEBI" id="CHEBI:59789"/>
        <dbReference type="ChEBI" id="CHEBI:82833"/>
        <dbReference type="ChEBI" id="CHEBI:194443"/>
        <dbReference type="EC" id="2.4.99.17"/>
    </reaction>
</comment>
<comment type="pathway">
    <text evidence="1">tRNA modification; tRNA-queuosine biosynthesis.</text>
</comment>
<comment type="subunit">
    <text evidence="1">Monomer.</text>
</comment>
<comment type="subcellular location">
    <subcellularLocation>
        <location evidence="1">Cytoplasm</location>
    </subcellularLocation>
</comment>
<comment type="similarity">
    <text evidence="1">Belongs to the QueA family.</text>
</comment>
<feature type="chain" id="PRO_1000094743" description="S-adenosylmethionine:tRNA ribosyltransferase-isomerase">
    <location>
        <begin position="1"/>
        <end position="345"/>
    </location>
</feature>
<reference key="1">
    <citation type="journal article" date="2007" name="Genes Dev.">
        <title>New insights into Acinetobacter baumannii pathogenesis revealed by high-density pyrosequencing and transposon mutagenesis.</title>
        <authorList>
            <person name="Smith M.G."/>
            <person name="Gianoulis T.A."/>
            <person name="Pukatzki S."/>
            <person name="Mekalanos J.J."/>
            <person name="Ornston L.N."/>
            <person name="Gerstein M."/>
            <person name="Snyder M."/>
        </authorList>
    </citation>
    <scope>NUCLEOTIDE SEQUENCE [LARGE SCALE GENOMIC DNA]</scope>
    <source>
        <strain>ATCC 17978 / DSM 105126 / CIP 53.77 / LMG 1025 / NCDC KC755 / 5377</strain>
    </source>
</reference>
<gene>
    <name evidence="1" type="primary">queA</name>
    <name type="ordered locus">A1S_2910</name>
</gene>
<accession>A3M8S1</accession>
<evidence type="ECO:0000255" key="1">
    <source>
        <dbReference type="HAMAP-Rule" id="MF_00113"/>
    </source>
</evidence>
<keyword id="KW-0963">Cytoplasm</keyword>
<keyword id="KW-0671">Queuosine biosynthesis</keyword>
<keyword id="KW-0949">S-adenosyl-L-methionine</keyword>
<keyword id="KW-0808">Transferase</keyword>
<organism>
    <name type="scientific">Acinetobacter baumannii (strain ATCC 17978 / DSM 105126 / CIP 53.77 / LMG 1025 / NCDC KC755 / 5377)</name>
    <dbReference type="NCBI Taxonomy" id="400667"/>
    <lineage>
        <taxon>Bacteria</taxon>
        <taxon>Pseudomonadati</taxon>
        <taxon>Pseudomonadota</taxon>
        <taxon>Gammaproteobacteria</taxon>
        <taxon>Moraxellales</taxon>
        <taxon>Moraxellaceae</taxon>
        <taxon>Acinetobacter</taxon>
        <taxon>Acinetobacter calcoaceticus/baumannii complex</taxon>
    </lineage>
</organism>
<proteinExistence type="inferred from homology"/>
<dbReference type="EC" id="2.4.99.17" evidence="1"/>
<dbReference type="EMBL" id="CP000521">
    <property type="protein sequence ID" value="ABO13315.2"/>
    <property type="molecule type" value="Genomic_DNA"/>
</dbReference>
<dbReference type="RefSeq" id="WP_001177138.1">
    <property type="nucleotide sequence ID" value="NZ_CP053098.1"/>
</dbReference>
<dbReference type="SMR" id="A3M8S1"/>
<dbReference type="KEGG" id="acb:A1S_2910"/>
<dbReference type="HOGENOM" id="CLU_039110_1_0_6"/>
<dbReference type="UniPathway" id="UPA00392"/>
<dbReference type="GO" id="GO:0005737">
    <property type="term" value="C:cytoplasm"/>
    <property type="evidence" value="ECO:0007669"/>
    <property type="project" value="UniProtKB-SubCell"/>
</dbReference>
<dbReference type="GO" id="GO:0051075">
    <property type="term" value="F:S-adenosylmethionine:tRNA ribosyltransferase-isomerase activity"/>
    <property type="evidence" value="ECO:0007669"/>
    <property type="project" value="UniProtKB-EC"/>
</dbReference>
<dbReference type="GO" id="GO:0008616">
    <property type="term" value="P:queuosine biosynthetic process"/>
    <property type="evidence" value="ECO:0007669"/>
    <property type="project" value="UniProtKB-UniRule"/>
</dbReference>
<dbReference type="GO" id="GO:0002099">
    <property type="term" value="P:tRNA wobble guanine modification"/>
    <property type="evidence" value="ECO:0007669"/>
    <property type="project" value="TreeGrafter"/>
</dbReference>
<dbReference type="FunFam" id="3.40.1780.10:FF:000001">
    <property type="entry name" value="S-adenosylmethionine:tRNA ribosyltransferase-isomerase"/>
    <property type="match status" value="1"/>
</dbReference>
<dbReference type="Gene3D" id="2.40.10.240">
    <property type="entry name" value="QueA-like"/>
    <property type="match status" value="1"/>
</dbReference>
<dbReference type="Gene3D" id="3.40.1780.10">
    <property type="entry name" value="QueA-like"/>
    <property type="match status" value="1"/>
</dbReference>
<dbReference type="HAMAP" id="MF_00113">
    <property type="entry name" value="QueA"/>
    <property type="match status" value="1"/>
</dbReference>
<dbReference type="InterPro" id="IPR003699">
    <property type="entry name" value="QueA"/>
</dbReference>
<dbReference type="InterPro" id="IPR042118">
    <property type="entry name" value="QueA_dom1"/>
</dbReference>
<dbReference type="InterPro" id="IPR042119">
    <property type="entry name" value="QueA_dom2"/>
</dbReference>
<dbReference type="InterPro" id="IPR036100">
    <property type="entry name" value="QueA_sf"/>
</dbReference>
<dbReference type="NCBIfam" id="NF001140">
    <property type="entry name" value="PRK00147.1"/>
    <property type="match status" value="1"/>
</dbReference>
<dbReference type="NCBIfam" id="TIGR00113">
    <property type="entry name" value="queA"/>
    <property type="match status" value="1"/>
</dbReference>
<dbReference type="PANTHER" id="PTHR30307">
    <property type="entry name" value="S-ADENOSYLMETHIONINE:TRNA RIBOSYLTRANSFERASE-ISOMERASE"/>
    <property type="match status" value="1"/>
</dbReference>
<dbReference type="PANTHER" id="PTHR30307:SF0">
    <property type="entry name" value="S-ADENOSYLMETHIONINE:TRNA RIBOSYLTRANSFERASE-ISOMERASE"/>
    <property type="match status" value="1"/>
</dbReference>
<dbReference type="Pfam" id="PF02547">
    <property type="entry name" value="Queuosine_synth"/>
    <property type="match status" value="1"/>
</dbReference>
<dbReference type="SUPFAM" id="SSF111337">
    <property type="entry name" value="QueA-like"/>
    <property type="match status" value="1"/>
</dbReference>
<protein>
    <recommendedName>
        <fullName evidence="1">S-adenosylmethionine:tRNA ribosyltransferase-isomerase</fullName>
        <ecNumber evidence="1">2.4.99.17</ecNumber>
    </recommendedName>
    <alternativeName>
        <fullName evidence="1">Queuosine biosynthesis protein QueA</fullName>
    </alternativeName>
</protein>
<name>QUEA_ACIBT</name>